<evidence type="ECO:0000250" key="1">
    <source>
        <dbReference type="UniProtKB" id="Q03410"/>
    </source>
</evidence>
<evidence type="ECO:0000250" key="2">
    <source>
        <dbReference type="UniProtKB" id="Q15431"/>
    </source>
</evidence>
<evidence type="ECO:0000255" key="3"/>
<evidence type="ECO:0000256" key="4">
    <source>
        <dbReference type="SAM" id="MobiDB-lite"/>
    </source>
</evidence>
<evidence type="ECO:0000269" key="5">
    <source>
    </source>
</evidence>
<evidence type="ECO:0000269" key="6">
    <source>
    </source>
</evidence>
<evidence type="ECO:0000269" key="7">
    <source>
    </source>
</evidence>
<evidence type="ECO:0000269" key="8">
    <source>
    </source>
</evidence>
<evidence type="ECO:0000269" key="9">
    <source>
    </source>
</evidence>
<evidence type="ECO:0000269" key="10">
    <source>
    </source>
</evidence>
<evidence type="ECO:0000269" key="11">
    <source>
    </source>
</evidence>
<evidence type="ECO:0000269" key="12">
    <source>
    </source>
</evidence>
<evidence type="ECO:0000269" key="13">
    <source>
    </source>
</evidence>
<evidence type="ECO:0000303" key="14">
    <source>
    </source>
</evidence>
<evidence type="ECO:0000303" key="15">
    <source>
    </source>
</evidence>
<evidence type="ECO:0000303" key="16">
    <source>
    </source>
</evidence>
<evidence type="ECO:0000305" key="17"/>
<evidence type="ECO:0000312" key="18">
    <source>
        <dbReference type="MGI" id="MGI:105931"/>
    </source>
</evidence>
<evidence type="ECO:0007744" key="19">
    <source>
    </source>
</evidence>
<name>SYCP1_MOUSE</name>
<comment type="function">
    <text evidence="5 7 9">Major component of the transverse filaments of synaptonemal complexes, formed between homologous chromosomes during meiotic prophase (PubMed:16717126). Required for normal assembly of the central element of the synaptonemal complexes (PubMed:15937223). Required for normal centromere pairing during meiosis (PubMed:22761579). Required for normal meiotic chromosome synapsis during oocyte and spermatocyte development and for normal male and female fertility (PubMed:15937223).</text>
</comment>
<comment type="subunit">
    <text evidence="2 5 6 7 8 9 10 13">Structural component of synaptonemal complexes (PubMed:15937223, PubMed:16717126, PubMed:22761579). Homotetramer that consists of an N-terminal four-helical bundle that bifurcates into two elongated C-terminal dimeric coiled coils. This tetrameric building block potentially self-assembles into a supramolecular zipper-like lattice to mediate meiotic chromosome synapsis. Self-assembly is likely initiated by local proton density at chromosome axis, which is predicted to trigger antiparallel back to back assembly of adjacent C-terminal ends into tetrameric structures that anchor to chromosomal DNA. Then the N-terminal ends are predicted to undergo cooperative antiparallel head to head assembly at the midline of synaptonemal complexes central element to form a zipper-like lattice between properly aligned homologous chromosomes (By similarity). The nascent synapsis generated by SYCP1 is stabilized through interaction with central element proteins SYCE1 and SYCE2 (PubMed:15944401, PubMed:16968740). Interacts (via tetrameric core) with SYCE3; the interaction remodels SYCP1 homotetramers to 2:1 heterotrimers with SYCE3 (By similarity). SYCP1/SYCE3 heterotrimers form lattice assemblies as part of the mature synaptonemal complex via both lateral and head-to-head interactions (By similarity). Forms a complex with EWSR1, PRDM9, SYCP3 and REC8; complex formation is dependent of phosphorylated form of REC8 and requires PRDM9 bound to hotspot DNA; EWSR1 joins PRDM9 with the chromosomal axis through REC8 (PubMed:27932493). Interacts with SPO16 (PubMed:30949703).</text>
</comment>
<comment type="subcellular location">
    <subcellularLocation>
        <location evidence="7">Nucleus</location>
    </subcellularLocation>
    <subcellularLocation>
        <location evidence="5 7 8 9 11 12 13">Chromosome</location>
    </subcellularLocation>
    <subcellularLocation>
        <location evidence="9">Chromosome</location>
        <location evidence="9">Centromere</location>
    </subcellularLocation>
    <text evidence="1 9">In tripartite segments of synaptonemal complexes, between lateral elements in the nucleus. Its N-terminus is found towards the center of the synaptonemal complex while the C-terminus extends well into the lateral domain of the synaptonemal complex (By similarity). Only rarely detected at centromeres during leptotene and zygotene. Detected at centromeres during mid-diplotene, when it is no longer present along chromosome arms. No longer detected at centromeres at later stages of meiosis (PubMed:22761579).</text>
</comment>
<comment type="tissue specificity">
    <text evidence="5 9">Detected in testis (PubMed:15937223). Detected in spermatocytes (at protein level) (PubMed:22761579).</text>
</comment>
<comment type="domain">
    <text evidence="2">The molecule is in a coiled coil structure that is formed by 4 polypeptide chains. The N-terminal region exhibits a prominent seven-residues periodicity.</text>
</comment>
<comment type="disruption phenotype">
    <text evidence="5">Mice appear generally healthy, but display complete sterility, due to defective meiosis during germ cell development. Ovaries and testes from mutant mice have strongly reduced weight relative to wild-type. Ovaries display an absence of growing follicles and oocytes. Testes show a complete lack of spermatids and spermatozoa. Synaptonemal complexes from mutant spermatocytes form normal axial elements, but lack the central element; chromosomes do not synapse properly, cross-overs are rare, and DNA repair after meiotic double-strand breaks is impaired.</text>
</comment>
<comment type="sequence caution" evidence="17">
    <conflict type="erroneous initiation">
        <sequence resource="EMBL-CDS" id="AAA64514"/>
    </conflict>
</comment>
<dbReference type="EMBL" id="Z38118">
    <property type="protein sequence ID" value="CAA86262.1"/>
    <property type="molecule type" value="mRNA"/>
</dbReference>
<dbReference type="EMBL" id="L41069">
    <property type="protein sequence ID" value="AAA64514.1"/>
    <property type="status" value="ALT_INIT"/>
    <property type="molecule type" value="mRNA"/>
</dbReference>
<dbReference type="EMBL" id="AH006782">
    <property type="protein sequence ID" value="AAC53335.1"/>
    <property type="molecule type" value="Genomic_DNA"/>
</dbReference>
<dbReference type="EMBL" id="AC122219">
    <property type="status" value="NOT_ANNOTATED_CDS"/>
    <property type="molecule type" value="Genomic_DNA"/>
</dbReference>
<dbReference type="EMBL" id="AC134871">
    <property type="status" value="NOT_ANNOTATED_CDS"/>
    <property type="molecule type" value="Genomic_DNA"/>
</dbReference>
<dbReference type="EMBL" id="BC137967">
    <property type="protein sequence ID" value="AAI37968.1"/>
    <property type="molecule type" value="mRNA"/>
</dbReference>
<dbReference type="EMBL" id="D88539">
    <property type="protein sequence ID" value="BAA13639.1"/>
    <property type="molecule type" value="mRNA"/>
</dbReference>
<dbReference type="CCDS" id="CCDS38567.1"/>
<dbReference type="PIR" id="S49461">
    <property type="entry name" value="S49461"/>
</dbReference>
<dbReference type="RefSeq" id="NP_035646.2">
    <property type="nucleotide sequence ID" value="NM_011516.2"/>
</dbReference>
<dbReference type="SMR" id="Q62209"/>
<dbReference type="BioGRID" id="203596">
    <property type="interactions" value="3"/>
</dbReference>
<dbReference type="CORUM" id="Q62209"/>
<dbReference type="FunCoup" id="Q62209">
    <property type="interactions" value="623"/>
</dbReference>
<dbReference type="MINT" id="Q62209"/>
<dbReference type="STRING" id="10090.ENSMUSP00000029448"/>
<dbReference type="iPTMnet" id="Q62209"/>
<dbReference type="PhosphoSitePlus" id="Q62209"/>
<dbReference type="jPOST" id="Q62209"/>
<dbReference type="PaxDb" id="10090-ENSMUSP00000029448"/>
<dbReference type="ProteomicsDB" id="254503"/>
<dbReference type="Antibodypedia" id="20167">
    <property type="antibodies" value="225 antibodies from 25 providers"/>
</dbReference>
<dbReference type="DNASU" id="20957"/>
<dbReference type="Ensembl" id="ENSMUST00000029448.11">
    <property type="protein sequence ID" value="ENSMUSP00000029448.7"/>
    <property type="gene ID" value="ENSMUSG00000027855.14"/>
</dbReference>
<dbReference type="Ensembl" id="ENSMUST00000196988.5">
    <property type="protein sequence ID" value="ENSMUSP00000143651.2"/>
    <property type="gene ID" value="ENSMUSG00000027855.14"/>
</dbReference>
<dbReference type="GeneID" id="20957"/>
<dbReference type="KEGG" id="mmu:20957"/>
<dbReference type="UCSC" id="uc008qrz.2">
    <property type="organism name" value="mouse"/>
</dbReference>
<dbReference type="AGR" id="MGI:105931"/>
<dbReference type="CTD" id="6847"/>
<dbReference type="MGI" id="MGI:105931">
    <property type="gene designation" value="Sycp1"/>
</dbReference>
<dbReference type="VEuPathDB" id="HostDB:ENSMUSG00000027855"/>
<dbReference type="eggNOG" id="ENOG502QTHX">
    <property type="taxonomic scope" value="Eukaryota"/>
</dbReference>
<dbReference type="GeneTree" id="ENSGT00390000003368"/>
<dbReference type="HOGENOM" id="CLU_311150_0_0_1"/>
<dbReference type="InParanoid" id="Q62209"/>
<dbReference type="OMA" id="KHKDQYD"/>
<dbReference type="OrthoDB" id="10064612at2759"/>
<dbReference type="PhylomeDB" id="Q62209"/>
<dbReference type="TreeFam" id="TF331737"/>
<dbReference type="BioGRID-ORCS" id="20957">
    <property type="hits" value="4 hits in 112 CRISPR screens"/>
</dbReference>
<dbReference type="ChiTaRS" id="Sycp1">
    <property type="organism name" value="mouse"/>
</dbReference>
<dbReference type="PRO" id="PR:Q62209"/>
<dbReference type="Proteomes" id="UP000000589">
    <property type="component" value="Chromosome 3"/>
</dbReference>
<dbReference type="RNAct" id="Q62209">
    <property type="molecule type" value="protein"/>
</dbReference>
<dbReference type="Bgee" id="ENSMUSG00000027855">
    <property type="expression patterns" value="Expressed in spermatocyte and 48 other cell types or tissues"/>
</dbReference>
<dbReference type="ExpressionAtlas" id="Q62209">
    <property type="expression patterns" value="baseline and differential"/>
</dbReference>
<dbReference type="GO" id="GO:0030849">
    <property type="term" value="C:autosome"/>
    <property type="evidence" value="ECO:0000314"/>
    <property type="project" value="MGI"/>
</dbReference>
<dbReference type="GO" id="GO:0000801">
    <property type="term" value="C:central element"/>
    <property type="evidence" value="ECO:0000314"/>
    <property type="project" value="MGI"/>
</dbReference>
<dbReference type="GO" id="GO:0005694">
    <property type="term" value="C:chromosome"/>
    <property type="evidence" value="ECO:0000314"/>
    <property type="project" value="UniProtKB"/>
</dbReference>
<dbReference type="GO" id="GO:0000775">
    <property type="term" value="C:chromosome, centromeric region"/>
    <property type="evidence" value="ECO:0007669"/>
    <property type="project" value="UniProtKB-SubCell"/>
</dbReference>
<dbReference type="GO" id="GO:0000794">
    <property type="term" value="C:condensed nuclear chromosome"/>
    <property type="evidence" value="ECO:0000314"/>
    <property type="project" value="MGI"/>
</dbReference>
<dbReference type="GO" id="GO:0000800">
    <property type="term" value="C:lateral element"/>
    <property type="evidence" value="ECO:0000304"/>
    <property type="project" value="HGNC-UCL"/>
</dbReference>
<dbReference type="GO" id="GO:0001673">
    <property type="term" value="C:male germ cell nucleus"/>
    <property type="evidence" value="ECO:0000314"/>
    <property type="project" value="MGI"/>
</dbReference>
<dbReference type="GO" id="GO:0005654">
    <property type="term" value="C:nucleoplasm"/>
    <property type="evidence" value="ECO:0000304"/>
    <property type="project" value="Reactome"/>
</dbReference>
<dbReference type="GO" id="GO:0000795">
    <property type="term" value="C:synaptonemal complex"/>
    <property type="evidence" value="ECO:0000314"/>
    <property type="project" value="MGI"/>
</dbReference>
<dbReference type="GO" id="GO:0000802">
    <property type="term" value="C:transverse filament"/>
    <property type="evidence" value="ECO:0000314"/>
    <property type="project" value="MGI"/>
</dbReference>
<dbReference type="GO" id="GO:0003690">
    <property type="term" value="F:double-stranded DNA binding"/>
    <property type="evidence" value="ECO:0000250"/>
    <property type="project" value="UniProtKB"/>
</dbReference>
<dbReference type="GO" id="GO:0051301">
    <property type="term" value="P:cell division"/>
    <property type="evidence" value="ECO:0007669"/>
    <property type="project" value="UniProtKB-KW"/>
</dbReference>
<dbReference type="GO" id="GO:0051026">
    <property type="term" value="P:chiasma assembly"/>
    <property type="evidence" value="ECO:0000316"/>
    <property type="project" value="MGI"/>
</dbReference>
<dbReference type="GO" id="GO:0007129">
    <property type="term" value="P:homologous chromosome pairing at meiosis"/>
    <property type="evidence" value="ECO:0000315"/>
    <property type="project" value="UniProtKB"/>
</dbReference>
<dbReference type="GO" id="GO:0051878">
    <property type="term" value="P:lateral element assembly"/>
    <property type="evidence" value="ECO:0000316"/>
    <property type="project" value="MGI"/>
</dbReference>
<dbReference type="GO" id="GO:0000711">
    <property type="term" value="P:meiotic DNA repair synthesis"/>
    <property type="evidence" value="ECO:0000315"/>
    <property type="project" value="MGI"/>
</dbReference>
<dbReference type="GO" id="GO:0051289">
    <property type="term" value="P:protein homotetramerization"/>
    <property type="evidence" value="ECO:0000250"/>
    <property type="project" value="UniProtKB"/>
</dbReference>
<dbReference type="GO" id="GO:0007131">
    <property type="term" value="P:reciprocal meiotic recombination"/>
    <property type="evidence" value="ECO:0000315"/>
    <property type="project" value="UniProtKB"/>
</dbReference>
<dbReference type="GO" id="GO:0032880">
    <property type="term" value="P:regulation of protein localization"/>
    <property type="evidence" value="ECO:0000315"/>
    <property type="project" value="MGI"/>
</dbReference>
<dbReference type="GO" id="GO:0035092">
    <property type="term" value="P:sperm DNA condensation"/>
    <property type="evidence" value="ECO:0000316"/>
    <property type="project" value="MGI"/>
</dbReference>
<dbReference type="GO" id="GO:0007283">
    <property type="term" value="P:spermatogenesis"/>
    <property type="evidence" value="ECO:0000316"/>
    <property type="project" value="MGI"/>
</dbReference>
<dbReference type="GO" id="GO:0007130">
    <property type="term" value="P:synaptonemal complex assembly"/>
    <property type="evidence" value="ECO:0000314"/>
    <property type="project" value="HGNC-UCL"/>
</dbReference>
<dbReference type="InterPro" id="IPR008827">
    <property type="entry name" value="SYCP1"/>
</dbReference>
<dbReference type="PANTHER" id="PTHR46918">
    <property type="entry name" value="SYNAPTONEMAL COMPLEX PROTEIN 1"/>
    <property type="match status" value="1"/>
</dbReference>
<dbReference type="PANTHER" id="PTHR46918:SF1">
    <property type="entry name" value="SYNAPTONEMAL COMPLEX PROTEIN 1"/>
    <property type="match status" value="1"/>
</dbReference>
<dbReference type="Pfam" id="PF05483">
    <property type="entry name" value="SCP-1"/>
    <property type="match status" value="1"/>
</dbReference>
<feature type="chain" id="PRO_0000072364" description="Synaptonemal complex protein 1">
    <location>
        <begin position="1"/>
        <end position="993"/>
    </location>
</feature>
<feature type="region of interest" description="Interaction with SYCE3" evidence="2">
    <location>
        <begin position="203"/>
        <end position="359"/>
    </location>
</feature>
<feature type="region of interest" description="Required for pH-induced assembly of C-terminal ends into antiparallel tetramers" evidence="2">
    <location>
        <begin position="694"/>
        <end position="788"/>
    </location>
</feature>
<feature type="region of interest" description="DNA-binding" evidence="2">
    <location>
        <begin position="801"/>
        <end position="993"/>
    </location>
</feature>
<feature type="region of interest" description="Disordered" evidence="4">
    <location>
        <begin position="824"/>
        <end position="861"/>
    </location>
</feature>
<feature type="coiled-coil region" evidence="3">
    <location>
        <begin position="117"/>
        <end position="172"/>
    </location>
</feature>
<feature type="coiled-coil region" evidence="3">
    <location>
        <begin position="215"/>
        <end position="688"/>
    </location>
</feature>
<feature type="coiled-coil region" evidence="3">
    <location>
        <begin position="764"/>
        <end position="808"/>
    </location>
</feature>
<feature type="short sequence motif" description="Mediates head to head self-assembly of N-terminal ends" evidence="2">
    <location>
        <begin position="98"/>
        <end position="108"/>
    </location>
</feature>
<feature type="short sequence motif" description="Nuclear localization signal" evidence="3">
    <location>
        <begin position="114"/>
        <end position="117"/>
    </location>
</feature>
<feature type="short sequence motif" description="Nuclear localization signal" evidence="3">
    <location>
        <begin position="697"/>
        <end position="700"/>
    </location>
</feature>
<feature type="short sequence motif" description="Nuclear localization signal" evidence="3">
    <location>
        <begin position="898"/>
        <end position="901"/>
    </location>
</feature>
<feature type="compositionally biased region" description="Polar residues" evidence="4">
    <location>
        <begin position="831"/>
        <end position="847"/>
    </location>
</feature>
<feature type="compositionally biased region" description="Basic and acidic residues" evidence="4">
    <location>
        <begin position="848"/>
        <end position="857"/>
    </location>
</feature>
<feature type="modified residue" description="Phosphoserine" evidence="19">
    <location>
        <position position="820"/>
    </location>
</feature>
<feature type="sequence conflict" description="In Ref. 1; AAC53335/CAA86262, 2; AAA64514 and 4; AAI37968." evidence="17" ref="1 2 4">
    <original>A</original>
    <variation>V</variation>
    <location>
        <position position="38"/>
    </location>
</feature>
<feature type="sequence conflict" description="In Ref. 2; AAA64514." evidence="17" ref="2">
    <original>F</original>
    <variation>L</variation>
    <location>
        <position position="527"/>
    </location>
</feature>
<keyword id="KW-0131">Cell cycle</keyword>
<keyword id="KW-0132">Cell division</keyword>
<keyword id="KW-0137">Centromere</keyword>
<keyword id="KW-0158">Chromosome</keyword>
<keyword id="KW-0175">Coiled coil</keyword>
<keyword id="KW-0238">DNA-binding</keyword>
<keyword id="KW-0469">Meiosis</keyword>
<keyword id="KW-0539">Nucleus</keyword>
<keyword id="KW-0597">Phosphoprotein</keyword>
<keyword id="KW-1185">Reference proteome</keyword>
<organism>
    <name type="scientific">Mus musculus</name>
    <name type="common">Mouse</name>
    <dbReference type="NCBI Taxonomy" id="10090"/>
    <lineage>
        <taxon>Eukaryota</taxon>
        <taxon>Metazoa</taxon>
        <taxon>Chordata</taxon>
        <taxon>Craniata</taxon>
        <taxon>Vertebrata</taxon>
        <taxon>Euteleostomi</taxon>
        <taxon>Mammalia</taxon>
        <taxon>Eutheria</taxon>
        <taxon>Euarchontoglires</taxon>
        <taxon>Glires</taxon>
        <taxon>Rodentia</taxon>
        <taxon>Myomorpha</taxon>
        <taxon>Muroidea</taxon>
        <taxon>Muridae</taxon>
        <taxon>Murinae</taxon>
        <taxon>Mus</taxon>
        <taxon>Mus</taxon>
    </lineage>
</organism>
<sequence>MEKQKPFTLFVPPRLSSSQVSAVKPQTAGGDSNYFKTANKCTEGDFGVPFTMSSRENIDKDPAFQKLSILPMLEQVANSGSCHYQEGVNDSDFENSEPMSRLYSKLYKEAEKIKKWKVSIESELKQKENKLQENRKIIEAQRKAIQELQFENEKVSLKLEEEIQENKDLIKENNATIHWCNLLKETCARSAEKTNKYEYEREETRQVYVDLNSNIEKMILAFEELRVQAENARLEMHFKLKEDHEKIQHLEEEYQKEVNNKENQVSELLIQSAEKENKMKDLTFLLEESRDKANQLEEKTKLQDENLKELSEKKDHLTSELEDIKMSMQRSMSTQKALEEDLQIATKTISQLTEVKEAQMEELNKAKTTHSFVVTELKATTCTLEELLRTEQQRLEKNEDQLKLITVELQKKSNELEEMTKFKNNKEVELEELKNILAEDQKLLDEKKQVEKLAEELQEKEQELTFLLETREKEVHDLQEQVTVTKTSEQHYLKQVEEMKTELEKEKLKNTELTASCDMLLLENKKFVQEASDMALELKKHQEDIINCKKQEERLLKQIENLEEKEMHLRDELESVRKEFIQQGDEVKCKLDKSEENARSIECEVLKKEKQMKILESKCNNLKKQVENKSKNIEELHQENKTLKKKSSAEIKQLNAYEIKVSKLELELESTKQRFEEMTNNYQKEIENKKISEGKLLGEVEKAKATVDEAVKLQKEIDLRCQHKIAEMVALMEKHKHQYDKIVEERDSELGLYKNREQEQSSAKIALETELSNIRNELVSLKKQLEIEKEEKEKLKMAKENTAILKDKKDKKIQASLLESPEATSWKFDSKTTPSQNISRLSSSMDSGKSKDNRDNLRASAKSILPTTVTKEYTVKTPTKKSIYQRENKYIPTGGSNKKRKTAFEFDVNSDSSETADLLSLVSEEDVSNRLYDNNPPDSHLLVKTPKQTPLSLSTPASFMKFGSLKKMREDRWTTIAKIDRKRRLKEAEKLFS</sequence>
<proteinExistence type="evidence at protein level"/>
<protein>
    <recommendedName>
        <fullName evidence="15">Synaptonemal complex protein 1</fullName>
        <shortName>SCP-1</shortName>
    </recommendedName>
</protein>
<gene>
    <name evidence="14 18" type="primary">Sycp1</name>
    <name evidence="16" type="synonym">Scp1</name>
</gene>
<reference key="1">
    <citation type="journal article" date="1995" name="Biochim. Biophys. Acta">
        <title>cDNA sequence of the murine synaptonemal complex protein 1 (SCP1).</title>
        <authorList>
            <person name="Sage J."/>
            <person name="Martin L."/>
            <person name="Cuzin F."/>
            <person name="Rassoulzadegan M."/>
        </authorList>
    </citation>
    <scope>NUCLEOTIDE SEQUENCE [MRNA]</scope>
    <source>
        <strain>CBA/J</strain>
        <tissue>Testis</tissue>
    </source>
</reference>
<reference key="2">
    <citation type="submission" date="1995-04" db="EMBL/GenBank/DDBJ databases">
        <authorList>
            <person name="Kerr S.M."/>
            <person name="Taggart M.H."/>
            <person name="Lee M."/>
            <person name="Cooke H.J."/>
        </authorList>
    </citation>
    <scope>NUCLEOTIDE SEQUENCE [MRNA]</scope>
    <source>
        <strain>SWR/J</strain>
        <tissue>Testis</tissue>
    </source>
</reference>
<reference key="3">
    <citation type="journal article" date="2009" name="PLoS Biol.">
        <title>Lineage-specific biology revealed by a finished genome assembly of the mouse.</title>
        <authorList>
            <person name="Church D.M."/>
            <person name="Goodstadt L."/>
            <person name="Hillier L.W."/>
            <person name="Zody M.C."/>
            <person name="Goldstein S."/>
            <person name="She X."/>
            <person name="Bult C.J."/>
            <person name="Agarwala R."/>
            <person name="Cherry J.L."/>
            <person name="DiCuccio M."/>
            <person name="Hlavina W."/>
            <person name="Kapustin Y."/>
            <person name="Meric P."/>
            <person name="Maglott D."/>
            <person name="Birtle Z."/>
            <person name="Marques A.C."/>
            <person name="Graves T."/>
            <person name="Zhou S."/>
            <person name="Teague B."/>
            <person name="Potamousis K."/>
            <person name="Churas C."/>
            <person name="Place M."/>
            <person name="Herschleb J."/>
            <person name="Runnheim R."/>
            <person name="Forrest D."/>
            <person name="Amos-Landgraf J."/>
            <person name="Schwartz D.C."/>
            <person name="Cheng Z."/>
            <person name="Lindblad-Toh K."/>
            <person name="Eichler E.E."/>
            <person name="Ponting C.P."/>
        </authorList>
    </citation>
    <scope>NUCLEOTIDE SEQUENCE [LARGE SCALE GENOMIC DNA]</scope>
    <source>
        <strain>C57BL/6J</strain>
    </source>
</reference>
<reference key="4">
    <citation type="journal article" date="2004" name="Genome Res.">
        <title>The status, quality, and expansion of the NIH full-length cDNA project: the Mammalian Gene Collection (MGC).</title>
        <authorList>
            <consortium name="The MGC Project Team"/>
        </authorList>
    </citation>
    <scope>NUCLEOTIDE SEQUENCE [LARGE SCALE MRNA]</scope>
    <source>
        <tissue>Brain</tissue>
    </source>
</reference>
<reference key="5">
    <citation type="submission" date="1997-01" db="EMBL/GenBank/DDBJ databases">
        <authorList>
            <person name="Sage J."/>
            <person name="Li Y."/>
            <person name="Martin L."/>
            <person name="Mattei M.-G."/>
            <person name="Guenet J.-L."/>
            <person name="Liu J.G."/>
            <person name="Hoog C."/>
            <person name="Cuzin F."/>
            <person name="Rassoulzadegan M."/>
        </authorList>
    </citation>
    <scope>NUCLEOTIDE SEQUENCE [GENOMIC DNA] OF 1-149</scope>
    <source>
        <strain>C57BL/6J</strain>
    </source>
</reference>
<reference key="6">
    <citation type="submission" date="1996-11" db="EMBL/GenBank/DDBJ databases">
        <authorList>
            <person name="Tsuchida J."/>
            <person name="Nishina Y."/>
            <person name="Nozaki M."/>
            <person name="Uchida K."/>
            <person name="Nishimune Y."/>
        </authorList>
    </citation>
    <scope>NUCLEOTIDE SEQUENCE [MRNA] OF 95-787</scope>
    <source>
        <strain>ICR</strain>
        <tissue>Testis</tissue>
    </source>
</reference>
<reference key="7">
    <citation type="journal article" date="2005" name="Genes Dev.">
        <title>Mouse Sycp1 functions in synaptonemal complex assembly, meiotic recombination, and XY body formation.</title>
        <authorList>
            <person name="de Vries F.A."/>
            <person name="de Boer E."/>
            <person name="van den Bosch M."/>
            <person name="Baarends W.M."/>
            <person name="Ooms M."/>
            <person name="Yuan L."/>
            <person name="Liu J.G."/>
            <person name="van Zeeland A.A."/>
            <person name="Heyting C."/>
            <person name="Pastink A."/>
        </authorList>
    </citation>
    <scope>DISRUPTION PHENOTYPE</scope>
    <scope>FUNCTION</scope>
    <scope>SUBCELLULAR LOCATION</scope>
    <scope>SUBUNIT</scope>
    <scope>TISSUE SPECIFICITY</scope>
</reference>
<reference key="8">
    <citation type="journal article" date="2005" name="J. Cell Sci.">
        <title>Two novel proteins recruited by synaptonemal complex protein 1 (SYCP1) are at the center of meiosis.</title>
        <authorList>
            <person name="Costa Y."/>
            <person name="Speed R."/>
            <person name="Oellinger R."/>
            <person name="Alsheimer M."/>
            <person name="Semple C.A."/>
            <person name="Gautier P."/>
            <person name="Maratou K."/>
            <person name="Novak I."/>
            <person name="Hoeoeg C."/>
            <person name="Benavente R."/>
            <person name="Cooke H.J."/>
        </authorList>
    </citation>
    <scope>IDENTIFICATION IN A COMPLEX WITH SYCE1 AND SYCE2</scope>
    <scope>INTERACTION WITH SYCE1 AND SYCE2</scope>
    <scope>SUBCELLULAR LOCATION</scope>
</reference>
<reference key="9">
    <citation type="journal article" date="2006" name="J. Cell Biol.">
        <title>Mouse SYCP2 is required for synaptonemal complex assembly and chromosomal synapsis during male meiosis.</title>
        <authorList>
            <person name="Yang F."/>
            <person name="De La Fuente R."/>
            <person name="Leu N.A."/>
            <person name="Baumann C."/>
            <person name="McLaughlin K.J."/>
            <person name="Wang P.J."/>
        </authorList>
    </citation>
    <scope>FUNCTION</scope>
    <scope>SUBUNIT</scope>
    <scope>SUBCELLULAR LOCATION</scope>
</reference>
<reference key="10">
    <citation type="journal article" date="2006" name="J. Cell Sci.">
        <title>Characterization of a novel meiosis-specific protein within the central element of the synaptonemal complex.</title>
        <authorList>
            <person name="Hamer G."/>
            <person name="Gell K."/>
            <person name="Kouznetsova A."/>
            <person name="Novak I."/>
            <person name="Benavente R."/>
            <person name="Hoeoeg C."/>
        </authorList>
    </citation>
    <scope>SUBCELLULAR LOCATION</scope>
    <scope>INTERACTION WITH SYCE1</scope>
</reference>
<reference key="11">
    <citation type="journal article" date="2010" name="Cell">
        <title>A tissue-specific atlas of mouse protein phosphorylation and expression.</title>
        <authorList>
            <person name="Huttlin E.L."/>
            <person name="Jedrychowski M.P."/>
            <person name="Elias J.E."/>
            <person name="Goswami T."/>
            <person name="Rad R."/>
            <person name="Beausoleil S.A."/>
            <person name="Villen J."/>
            <person name="Haas W."/>
            <person name="Sowa M.E."/>
            <person name="Gygi S.P."/>
        </authorList>
    </citation>
    <scope>PHOSPHORYLATION [LARGE SCALE ANALYSIS] AT SER-820</scope>
    <scope>IDENTIFICATION BY MASS SPECTROMETRY [LARGE SCALE ANALYSIS]</scope>
    <source>
        <tissue>Testis</tissue>
    </source>
</reference>
<reference key="12">
    <citation type="journal article" date="2012" name="PLoS Genet.">
        <title>Synaptonemal complex components persist at centromeres and are required for homologous centromere pairing in mouse spermatocytes.</title>
        <authorList>
            <person name="Bisig C.G."/>
            <person name="Guiraldelli M.F."/>
            <person name="Kouznetsova A."/>
            <person name="Scherthan H."/>
            <person name="Hoeoeg C."/>
            <person name="Dawson D.S."/>
            <person name="Pezza R.J."/>
        </authorList>
    </citation>
    <scope>FUNCTION</scope>
    <scope>SUBCELLULAR LOCATION</scope>
    <scope>SUBUNIT</scope>
    <scope>TISSUE SPECIFICITY</scope>
</reference>
<reference key="13">
    <citation type="journal article" date="2017" name="Mol. Biol. Cell">
        <title>PRDM9 interactions with other proteins provide a link between recombination hotspots and the chromosomal axis in meiosis.</title>
        <authorList>
            <person name="Parvanov E.D."/>
            <person name="Tian H."/>
            <person name="Billings T."/>
            <person name="Saxl R.L."/>
            <person name="Spruce C."/>
            <person name="Aithal R."/>
            <person name="Krejci L."/>
            <person name="Paigen K."/>
            <person name="Petkov P.M."/>
        </authorList>
    </citation>
    <scope>INTERACTION WITH PRDM9; EWSR1; SYCP3 AND REC8</scope>
</reference>
<reference key="14">
    <citation type="journal article" date="2018" name="Commun. Biol.">
        <title>Evolutionarily-conserved MZIP2 is essential for crossover formation in mammalian meiosis.</title>
        <authorList>
            <person name="Zhang Q."/>
            <person name="Shao J."/>
            <person name="Fan H.Y."/>
            <person name="Yu C."/>
        </authorList>
    </citation>
    <scope>SUBCELLULAR LOCATION</scope>
</reference>
<reference key="15">
    <citation type="journal article" date="2019" name="Nucleic Acids Res.">
        <title>SCRE serves as a unique synaptonemal complex fastener and is essential for progression of meiosis prophase I in mice.</title>
        <authorList>
            <person name="Liu H."/>
            <person name="Huang T."/>
            <person name="Li M."/>
            <person name="Li M."/>
            <person name="Zhang C."/>
            <person name="Jiang J."/>
            <person name="Yu X."/>
            <person name="Yin Y."/>
            <person name="Zhang F."/>
            <person name="Lu G."/>
            <person name="Luo M.C."/>
            <person name="Zhang L.R."/>
            <person name="Li J."/>
            <person name="Liu K."/>
            <person name="Chen Z.J."/>
        </authorList>
    </citation>
    <scope>SUBCELLULAR LOCATION</scope>
    <scope>INTERACTION WITH SPO16</scope>
</reference>
<reference key="16">
    <citation type="journal article" date="2019" name="Sci. Adv.">
        <title>SPO16 binds SHOC1 to promote homologous recombination and crossing-over in meiotic prophase I.</title>
        <authorList>
            <person name="Zhang Q."/>
            <person name="Ji S.Y."/>
            <person name="Busayavalasa K."/>
            <person name="Yu C."/>
        </authorList>
    </citation>
    <scope>SUBCELLULAR LOCATION</scope>
</reference>
<accession>Q62209</accession>
<accession>B2RQK2</accession>
<accession>E9QP17</accession>
<accession>O09205</accession>
<accession>P70192</accession>
<accession>Q62329</accession>